<name>GLFT1_MYCS2</name>
<proteinExistence type="evidence at protein level"/>
<sequence length="302" mass="34041">MTHTEVVCAVVVTHRRRELLATSLDAVVSQDRKPDHLIVVDNDNDPQVRELVTGQPVPSTYLGSRRNLGGAGGFALGMLHALALGADWIWLADDDGRPADTTVLSTLLSCAHTHSLAEVSPMVCNLDDPQRLAFPLRRGLVWRRLTSELRTDSSSSSGDLLPGIASLFNGALFRADTVDAVGVPDLRLFVRGDEVELHRRLVRSGLPFGTCLTASYLHPCGTDEFKPILGGRMHTQYPDDETKRFFTYRNRGYLLSQPGLRKLLPQEWLRFGWYFLVSRRDLAGLREWIRLRRLGRRERFQR</sequence>
<feature type="chain" id="PRO_0000395357" description="Galactofuranosyltransferase GlfT1">
    <location>
        <begin position="1"/>
        <end position="302"/>
    </location>
</feature>
<gene>
    <name evidence="3" type="primary">glfT1</name>
    <name type="ordered locus">MSMEG_6367</name>
    <name type="ordered locus">MSMEI_6199</name>
</gene>
<reference key="1">
    <citation type="submission" date="2006-10" db="EMBL/GenBank/DDBJ databases">
        <authorList>
            <person name="Fleischmann R.D."/>
            <person name="Dodson R.J."/>
            <person name="Haft D.H."/>
            <person name="Merkel J.S."/>
            <person name="Nelson W.C."/>
            <person name="Fraser C.M."/>
        </authorList>
    </citation>
    <scope>NUCLEOTIDE SEQUENCE [LARGE SCALE GENOMIC DNA]</scope>
    <source>
        <strain>ATCC 700084 / mc(2)155</strain>
    </source>
</reference>
<reference key="2">
    <citation type="journal article" date="2007" name="Genome Biol.">
        <title>Interrupted coding sequences in Mycobacterium smegmatis: authentic mutations or sequencing errors?</title>
        <authorList>
            <person name="Deshayes C."/>
            <person name="Perrodou E."/>
            <person name="Gallien S."/>
            <person name="Euphrasie D."/>
            <person name="Schaeffer C."/>
            <person name="Van-Dorsselaer A."/>
            <person name="Poch O."/>
            <person name="Lecompte O."/>
            <person name="Reyrat J.-M."/>
        </authorList>
    </citation>
    <scope>NUCLEOTIDE SEQUENCE [LARGE SCALE GENOMIC DNA]</scope>
    <source>
        <strain>ATCC 700084 / mc(2)155</strain>
    </source>
</reference>
<reference key="3">
    <citation type="journal article" date="2009" name="Genome Res.">
        <title>Ortho-proteogenomics: multiple proteomes investigation through orthology and a new MS-based protocol.</title>
        <authorList>
            <person name="Gallien S."/>
            <person name="Perrodou E."/>
            <person name="Carapito C."/>
            <person name="Deshayes C."/>
            <person name="Reyrat J.-M."/>
            <person name="Van Dorsselaer A."/>
            <person name="Poch O."/>
            <person name="Schaeffer C."/>
            <person name="Lecompte O."/>
        </authorList>
    </citation>
    <scope>NUCLEOTIDE SEQUENCE [LARGE SCALE GENOMIC DNA]</scope>
    <source>
        <strain>ATCC 700084 / mc(2)155</strain>
    </source>
</reference>
<reference key="4">
    <citation type="journal article" date="2008" name="J. Bacteriol.">
        <title>Galactosyl transferases in mycobacterial cell wall synthesis.</title>
        <authorList>
            <person name="Belanova M."/>
            <person name="Dianiskova P."/>
            <person name="Brennan P.J."/>
            <person name="Completo G.C."/>
            <person name="Rose N.L."/>
            <person name="Lowary T.L."/>
            <person name="Mikusova K."/>
        </authorList>
    </citation>
    <scope>FUNCTION</scope>
    <scope>CATALYTIC ACTIVITY</scope>
    <scope>PATHWAY</scope>
    <scope>SUBSTRATE SPECIFICITY</scope>
    <source>
        <strain>ATCC 700084 / mc(2)155</strain>
    </source>
</reference>
<dbReference type="EC" id="2.4.1.287" evidence="2"/>
<dbReference type="EMBL" id="CP000480">
    <property type="protein sequence ID" value="ABK69689.1"/>
    <property type="molecule type" value="Genomic_DNA"/>
</dbReference>
<dbReference type="EMBL" id="CP001663">
    <property type="protein sequence ID" value="AFP42625.1"/>
    <property type="status" value="ALT_INIT"/>
    <property type="molecule type" value="Genomic_DNA"/>
</dbReference>
<dbReference type="RefSeq" id="WP_011731236.1">
    <property type="nucleotide sequence ID" value="NZ_SIJM01000013.1"/>
</dbReference>
<dbReference type="RefSeq" id="YP_890580.1">
    <property type="nucleotide sequence ID" value="NC_008596.1"/>
</dbReference>
<dbReference type="SMR" id="A0R5Z2"/>
<dbReference type="STRING" id="246196.MSMEG_6367"/>
<dbReference type="CAZy" id="GT2">
    <property type="family name" value="Glycosyltransferase Family 2"/>
</dbReference>
<dbReference type="PaxDb" id="246196-MSMEI_6199"/>
<dbReference type="KEGG" id="msb:LJ00_31470"/>
<dbReference type="KEGG" id="msg:MSMEI_6199"/>
<dbReference type="KEGG" id="msm:MSMEG_6367"/>
<dbReference type="PATRIC" id="fig|246196.19.peg.6195"/>
<dbReference type="eggNOG" id="COG1216">
    <property type="taxonomic scope" value="Bacteria"/>
</dbReference>
<dbReference type="OrthoDB" id="7665907at2"/>
<dbReference type="UniPathway" id="UPA00963"/>
<dbReference type="Proteomes" id="UP000000757">
    <property type="component" value="Chromosome"/>
</dbReference>
<dbReference type="Proteomes" id="UP000006158">
    <property type="component" value="Chromosome"/>
</dbReference>
<dbReference type="GO" id="GO:0005576">
    <property type="term" value="C:extracellular region"/>
    <property type="evidence" value="ECO:0007669"/>
    <property type="project" value="UniProtKB-KW"/>
</dbReference>
<dbReference type="GO" id="GO:0005886">
    <property type="term" value="C:plasma membrane"/>
    <property type="evidence" value="ECO:0007669"/>
    <property type="project" value="UniProtKB-SubCell"/>
</dbReference>
<dbReference type="GO" id="GO:0016757">
    <property type="term" value="F:glycosyltransferase activity"/>
    <property type="evidence" value="ECO:0000314"/>
    <property type="project" value="UniProtKB"/>
</dbReference>
<dbReference type="GO" id="GO:0016740">
    <property type="term" value="F:transferase activity"/>
    <property type="evidence" value="ECO:0000314"/>
    <property type="project" value="UniProtKB"/>
</dbReference>
<dbReference type="GO" id="GO:0045227">
    <property type="term" value="P:capsule polysaccharide biosynthetic process"/>
    <property type="evidence" value="ECO:0007669"/>
    <property type="project" value="UniProtKB-UniPathway"/>
</dbReference>
<dbReference type="GO" id="GO:0044038">
    <property type="term" value="P:cell wall macromolecule biosynthetic process"/>
    <property type="evidence" value="ECO:0000314"/>
    <property type="project" value="UniProtKB"/>
</dbReference>
<dbReference type="GO" id="GO:0071555">
    <property type="term" value="P:cell wall organization"/>
    <property type="evidence" value="ECO:0000314"/>
    <property type="project" value="UniProtKB"/>
</dbReference>
<dbReference type="FunFam" id="3.90.550.60:FF:000002">
    <property type="entry name" value="Galactofuranosyl transferase GlfT1"/>
    <property type="match status" value="1"/>
</dbReference>
<dbReference type="Gene3D" id="3.90.550.60">
    <property type="match status" value="1"/>
</dbReference>
<dbReference type="InterPro" id="IPR001173">
    <property type="entry name" value="Glyco_trans_2-like"/>
</dbReference>
<dbReference type="InterPro" id="IPR029044">
    <property type="entry name" value="Nucleotide-diphossugar_trans"/>
</dbReference>
<dbReference type="PANTHER" id="PTHR43179:SF12">
    <property type="entry name" value="GALACTOFURANOSYLTRANSFERASE GLFT2"/>
    <property type="match status" value="1"/>
</dbReference>
<dbReference type="PANTHER" id="PTHR43179">
    <property type="entry name" value="RHAMNOSYLTRANSFERASE WBBL"/>
    <property type="match status" value="1"/>
</dbReference>
<dbReference type="Pfam" id="PF00535">
    <property type="entry name" value="Glycos_transf_2"/>
    <property type="match status" value="1"/>
</dbReference>
<dbReference type="SUPFAM" id="SSF53448">
    <property type="entry name" value="Nucleotide-diphospho-sugar transferases"/>
    <property type="match status" value="1"/>
</dbReference>
<accession>A0R5Z2</accession>
<accession>I7FMT0</accession>
<comment type="function">
    <text evidence="2">Involved in the biosynthesis of the arabinogalactan (AG) region of the mycolylarabinogalactan-peptidoglycan (mAGP) complex, an essential component of the mycobacterial cell wall. Catalyzes the transfer of the first two galactofuranosyl (Galf) units from UDP-galactofuranose (UDP-Galf) onto the rhamnosyl-GlcNAc-diphospho-decaprenol (Rha-GlcNAc-PP-C50) acceptor, yielding galactofuranosyl-galactofuranosyl-rhamnosyl-GlcNAc-diphospho-decaprenol (Galf-Galf-Rha-GlcNAc-PP-C50). Thus, GlfT1 is the initiator of galactan synthesis, while GlfT2 continues with the subsequent polymerization events.</text>
</comment>
<comment type="catalytic activity">
    <reaction evidence="2">
        <text>alpha-L-rhamnosyl-(1-&gt;3)-N-acetyl-alpha-D-glucosaminyl-diphospho-trans,octa-cis-decaprenol + 2 UDP-alpha-D-galactofuranose = beta-D-galactofuranosyl-(1-&gt;5)-beta-D-galactofuranosyl-(1-&gt;4)-alpha-L-rhamnosyl-(1-&gt;3)-N-acetyl-alpha-D-glucosaminyl-diphospho-trans,octa-cis-decaprenol + 2 UDP + 2 H(+)</text>
        <dbReference type="Rhea" id="RHEA:34379"/>
        <dbReference type="ChEBI" id="CHEBI:15378"/>
        <dbReference type="ChEBI" id="CHEBI:58223"/>
        <dbReference type="ChEBI" id="CHEBI:66915"/>
        <dbReference type="ChEBI" id="CHEBI:67209"/>
        <dbReference type="ChEBI" id="CHEBI:67210"/>
        <dbReference type="EC" id="2.4.1.287"/>
    </reaction>
</comment>
<comment type="pathway">
    <text evidence="5">Cell wall biogenesis; cell wall polysaccharide biosynthesis.</text>
</comment>
<comment type="subcellular location">
    <subcellularLocation>
        <location evidence="1">Cell membrane</location>
    </subcellularLocation>
    <subcellularLocation>
        <location evidence="1">Secreted</location>
        <location evidence="1">Cell wall</location>
    </subcellularLocation>
</comment>
<comment type="similarity">
    <text evidence="4">Belongs to the glycosyltransferase 2 family.</text>
</comment>
<comment type="sequence caution" evidence="4">
    <conflict type="erroneous initiation">
        <sequence resource="EMBL-CDS" id="AFP42625"/>
    </conflict>
    <text>Extended N-terminus.</text>
</comment>
<organism>
    <name type="scientific">Mycolicibacterium smegmatis (strain ATCC 700084 / mc(2)155)</name>
    <name type="common">Mycobacterium smegmatis</name>
    <dbReference type="NCBI Taxonomy" id="246196"/>
    <lineage>
        <taxon>Bacteria</taxon>
        <taxon>Bacillati</taxon>
        <taxon>Actinomycetota</taxon>
        <taxon>Actinomycetes</taxon>
        <taxon>Mycobacteriales</taxon>
        <taxon>Mycobacteriaceae</taxon>
        <taxon>Mycolicibacterium</taxon>
    </lineage>
</organism>
<protein>
    <recommendedName>
        <fullName evidence="4">Galactofuranosyltransferase GlfT1</fullName>
        <shortName evidence="4">GalTr 1</shortName>
        <ecNumber evidence="2">2.4.1.287</ecNumber>
    </recommendedName>
    <alternativeName>
        <fullName evidence="4">Arabinogalactan galactosyltransferase 1</fullName>
    </alternativeName>
    <alternativeName>
        <fullName>Rhamnopyranosyl-N-acetylglucosaminyl-diphospho-decaprenol beta-1,4/1,5-galactofuranosyltransferase</fullName>
    </alternativeName>
    <alternativeName>
        <fullName>UDP-Galf:alpha-3-L-rhamnosyl-alpha-D-GlcNAc-pyrophosphate polyprenol, galactofuranosyl transferase</fullName>
    </alternativeName>
</protein>
<keyword id="KW-1003">Cell membrane</keyword>
<keyword id="KW-0134">Cell wall</keyword>
<keyword id="KW-0961">Cell wall biogenesis/degradation</keyword>
<keyword id="KW-0328">Glycosyltransferase</keyword>
<keyword id="KW-0472">Membrane</keyword>
<keyword id="KW-1185">Reference proteome</keyword>
<keyword id="KW-0964">Secreted</keyword>
<keyword id="KW-0808">Transferase</keyword>
<evidence type="ECO:0000250" key="1">
    <source>
        <dbReference type="UniProtKB" id="P9WMX3"/>
    </source>
</evidence>
<evidence type="ECO:0000269" key="2">
    <source>
    </source>
</evidence>
<evidence type="ECO:0000303" key="3">
    <source>
    </source>
</evidence>
<evidence type="ECO:0000305" key="4"/>
<evidence type="ECO:0000305" key="5">
    <source>
    </source>
</evidence>